<dbReference type="EC" id="6.1.1.-" evidence="1"/>
<dbReference type="EMBL" id="BA000037">
    <property type="protein sequence ID" value="BAC95524.1"/>
    <property type="molecule type" value="Genomic_DNA"/>
</dbReference>
<dbReference type="SMR" id="Q7MHV7"/>
<dbReference type="STRING" id="672.VV93_v1c24720"/>
<dbReference type="KEGG" id="vvy:VV2760"/>
<dbReference type="eggNOG" id="COG0008">
    <property type="taxonomic scope" value="Bacteria"/>
</dbReference>
<dbReference type="HOGENOM" id="CLU_015768_0_1_6"/>
<dbReference type="Proteomes" id="UP000002675">
    <property type="component" value="Chromosome I"/>
</dbReference>
<dbReference type="GO" id="GO:0005829">
    <property type="term" value="C:cytosol"/>
    <property type="evidence" value="ECO:0007669"/>
    <property type="project" value="TreeGrafter"/>
</dbReference>
<dbReference type="GO" id="GO:0005524">
    <property type="term" value="F:ATP binding"/>
    <property type="evidence" value="ECO:0007669"/>
    <property type="project" value="UniProtKB-KW"/>
</dbReference>
<dbReference type="GO" id="GO:0004818">
    <property type="term" value="F:glutamate-tRNA ligase activity"/>
    <property type="evidence" value="ECO:0007669"/>
    <property type="project" value="TreeGrafter"/>
</dbReference>
<dbReference type="GO" id="GO:0008270">
    <property type="term" value="F:zinc ion binding"/>
    <property type="evidence" value="ECO:0007669"/>
    <property type="project" value="UniProtKB-UniRule"/>
</dbReference>
<dbReference type="GO" id="GO:0006424">
    <property type="term" value="P:glutamyl-tRNA aminoacylation"/>
    <property type="evidence" value="ECO:0007669"/>
    <property type="project" value="InterPro"/>
</dbReference>
<dbReference type="GO" id="GO:0006400">
    <property type="term" value="P:tRNA modification"/>
    <property type="evidence" value="ECO:0007669"/>
    <property type="project" value="InterPro"/>
</dbReference>
<dbReference type="FunFam" id="3.40.50.620:FF:000093">
    <property type="entry name" value="Glutamyl-Q tRNA(Asp) synthetase"/>
    <property type="match status" value="1"/>
</dbReference>
<dbReference type="Gene3D" id="3.40.50.620">
    <property type="entry name" value="HUPs"/>
    <property type="match status" value="1"/>
</dbReference>
<dbReference type="HAMAP" id="MF_01428">
    <property type="entry name" value="Glu_Q_tRNA_synth"/>
    <property type="match status" value="1"/>
</dbReference>
<dbReference type="InterPro" id="IPR022380">
    <property type="entry name" value="Glu-Q_tRNA(Asp)_Synthase"/>
</dbReference>
<dbReference type="InterPro" id="IPR000924">
    <property type="entry name" value="Glu/Gln-tRNA-synth"/>
</dbReference>
<dbReference type="InterPro" id="IPR020058">
    <property type="entry name" value="Glu/Gln-tRNA-synth_Ib_cat-dom"/>
</dbReference>
<dbReference type="InterPro" id="IPR049940">
    <property type="entry name" value="GluQ/Sye"/>
</dbReference>
<dbReference type="InterPro" id="IPR014729">
    <property type="entry name" value="Rossmann-like_a/b/a_fold"/>
</dbReference>
<dbReference type="NCBIfam" id="NF004314">
    <property type="entry name" value="PRK05710.1-3"/>
    <property type="match status" value="1"/>
</dbReference>
<dbReference type="NCBIfam" id="TIGR03838">
    <property type="entry name" value="queuosine_YadB"/>
    <property type="match status" value="1"/>
</dbReference>
<dbReference type="PANTHER" id="PTHR43311">
    <property type="entry name" value="GLUTAMATE--TRNA LIGASE"/>
    <property type="match status" value="1"/>
</dbReference>
<dbReference type="PANTHER" id="PTHR43311:SF1">
    <property type="entry name" value="GLUTAMYL-Q TRNA(ASP) SYNTHETASE"/>
    <property type="match status" value="1"/>
</dbReference>
<dbReference type="Pfam" id="PF00749">
    <property type="entry name" value="tRNA-synt_1c"/>
    <property type="match status" value="1"/>
</dbReference>
<dbReference type="PRINTS" id="PR00987">
    <property type="entry name" value="TRNASYNTHGLU"/>
</dbReference>
<dbReference type="SUPFAM" id="SSF52374">
    <property type="entry name" value="Nucleotidylyl transferase"/>
    <property type="match status" value="1"/>
</dbReference>
<name>GLUQ_VIBVY</name>
<keyword id="KW-0030">Aminoacyl-tRNA synthetase</keyword>
<keyword id="KW-0067">ATP-binding</keyword>
<keyword id="KW-0436">Ligase</keyword>
<keyword id="KW-0479">Metal-binding</keyword>
<keyword id="KW-0547">Nucleotide-binding</keyword>
<keyword id="KW-0862">Zinc</keyword>
<feature type="chain" id="PRO_0000208334" description="Glutamyl-Q tRNA(Asp) synthetase">
    <location>
        <begin position="1"/>
        <end position="303"/>
    </location>
</feature>
<feature type="short sequence motif" description="'HIGH' region">
    <location>
        <begin position="19"/>
        <end position="29"/>
    </location>
</feature>
<feature type="short sequence motif" description="'KMSKS' region">
    <location>
        <begin position="233"/>
        <end position="237"/>
    </location>
</feature>
<feature type="binding site" evidence="1">
    <location>
        <begin position="16"/>
        <end position="20"/>
    </location>
    <ligand>
        <name>L-glutamate</name>
        <dbReference type="ChEBI" id="CHEBI:29985"/>
    </ligand>
</feature>
<feature type="binding site" evidence="1">
    <location>
        <position position="52"/>
    </location>
    <ligand>
        <name>L-glutamate</name>
        <dbReference type="ChEBI" id="CHEBI:29985"/>
    </ligand>
</feature>
<feature type="binding site" evidence="1">
    <location>
        <position position="108"/>
    </location>
    <ligand>
        <name>Zn(2+)</name>
        <dbReference type="ChEBI" id="CHEBI:29105"/>
    </ligand>
</feature>
<feature type="binding site" evidence="1">
    <location>
        <position position="110"/>
    </location>
    <ligand>
        <name>Zn(2+)</name>
        <dbReference type="ChEBI" id="CHEBI:29105"/>
    </ligand>
</feature>
<feature type="binding site" evidence="1">
    <location>
        <position position="122"/>
    </location>
    <ligand>
        <name>Zn(2+)</name>
        <dbReference type="ChEBI" id="CHEBI:29105"/>
    </ligand>
</feature>
<feature type="binding site" evidence="1">
    <location>
        <position position="126"/>
    </location>
    <ligand>
        <name>Zn(2+)</name>
        <dbReference type="ChEBI" id="CHEBI:29105"/>
    </ligand>
</feature>
<feature type="binding site" evidence="1">
    <location>
        <position position="177"/>
    </location>
    <ligand>
        <name>L-glutamate</name>
        <dbReference type="ChEBI" id="CHEBI:29985"/>
    </ligand>
</feature>
<feature type="binding site" evidence="1">
    <location>
        <position position="195"/>
    </location>
    <ligand>
        <name>L-glutamate</name>
        <dbReference type="ChEBI" id="CHEBI:29985"/>
    </ligand>
</feature>
<feature type="binding site" evidence="1">
    <location>
        <position position="236"/>
    </location>
    <ligand>
        <name>ATP</name>
        <dbReference type="ChEBI" id="CHEBI:30616"/>
    </ligand>
</feature>
<comment type="function">
    <text evidence="1">Catalyzes the tRNA-independent activation of glutamate in presence of ATP and the subsequent transfer of glutamate onto a tRNA(Asp). Glutamate is transferred on the 2-amino-5-(4,5-dihydroxy-2-cyclopenten-1-yl) moiety of the queuosine in the wobble position of the QUC anticodon.</text>
</comment>
<comment type="cofactor">
    <cofactor evidence="1">
        <name>Zn(2+)</name>
        <dbReference type="ChEBI" id="CHEBI:29105"/>
    </cofactor>
    <text evidence="1">Binds 1 zinc ion per subunit.</text>
</comment>
<comment type="similarity">
    <text evidence="1">Belongs to the class-I aminoacyl-tRNA synthetase family. GluQ subfamily.</text>
</comment>
<accession>Q7MHV7</accession>
<sequence>MLPFCFEMTSMSYIGRFAPSPSGPLHFGSLIAALGSYFQAKSQHGQWLVRIEDLDPPREMPGAADLILKTLETYHLFWDGEVVYQSQRHHLYQAQIDHWLQSGQAYYCQCSRKQIKEMGGYYNGHCQELHLDAGAIRLKMTQPITHFDDLRHGQMHIPLELAQEDFIIKRRDGLFAYNLAVVLDDIDQGVTEVVRGADLIEPTGRQISLYHMLGQVPVRYLHLPLAMDKNGNKLSKQNHATGIDLTHPASMILEAMAFLGFAIPKELHQANLDEILRWGVQNWRLNQLPESLEITARFSNGTA</sequence>
<gene>
    <name evidence="1" type="primary">gluQ</name>
    <name type="ordered locus">VV2760</name>
</gene>
<organism>
    <name type="scientific">Vibrio vulnificus (strain YJ016)</name>
    <dbReference type="NCBI Taxonomy" id="196600"/>
    <lineage>
        <taxon>Bacteria</taxon>
        <taxon>Pseudomonadati</taxon>
        <taxon>Pseudomonadota</taxon>
        <taxon>Gammaproteobacteria</taxon>
        <taxon>Vibrionales</taxon>
        <taxon>Vibrionaceae</taxon>
        <taxon>Vibrio</taxon>
    </lineage>
</organism>
<reference key="1">
    <citation type="journal article" date="2003" name="Genome Res.">
        <title>Comparative genome analysis of Vibrio vulnificus, a marine pathogen.</title>
        <authorList>
            <person name="Chen C.-Y."/>
            <person name="Wu K.-M."/>
            <person name="Chang Y.-C."/>
            <person name="Chang C.-H."/>
            <person name="Tsai H.-C."/>
            <person name="Liao T.-L."/>
            <person name="Liu Y.-M."/>
            <person name="Chen H.-J."/>
            <person name="Shen A.B.-T."/>
            <person name="Li J.-C."/>
            <person name="Su T.-L."/>
            <person name="Shao C.-P."/>
            <person name="Lee C.-T."/>
            <person name="Hor L.-I."/>
            <person name="Tsai S.-F."/>
        </authorList>
    </citation>
    <scope>NUCLEOTIDE SEQUENCE [LARGE SCALE GENOMIC DNA]</scope>
    <source>
        <strain>YJ016</strain>
    </source>
</reference>
<evidence type="ECO:0000255" key="1">
    <source>
        <dbReference type="HAMAP-Rule" id="MF_01428"/>
    </source>
</evidence>
<protein>
    <recommendedName>
        <fullName evidence="1">Glutamyl-Q tRNA(Asp) synthetase</fullName>
        <shortName evidence="1">Glu-Q-RSs</shortName>
        <ecNumber evidence="1">6.1.1.-</ecNumber>
    </recommendedName>
</protein>
<proteinExistence type="inferred from homology"/>